<name>CYVC_VIOBI</name>
<proteinExistence type="evidence at protein level"/>
<sequence>GLPVCGETCAFGSCYTPGCSCSWPVCTRN</sequence>
<keyword id="KW-0903">Direct protein sequencing</keyword>
<keyword id="KW-1015">Disulfide bond</keyword>
<keyword id="KW-0960">Knottin</keyword>
<keyword id="KW-0611">Plant defense</keyword>
<protein>
    <recommendedName>
        <fullName>Cyclotide vibi-C</fullName>
    </recommendedName>
</protein>
<evidence type="ECO:0000250" key="1">
    <source>
        <dbReference type="UniProtKB" id="P56254"/>
    </source>
</evidence>
<evidence type="ECO:0000255" key="2">
    <source>
        <dbReference type="PROSITE-ProRule" id="PRU00395"/>
    </source>
</evidence>
<evidence type="ECO:0000269" key="3">
    <source>
    </source>
</evidence>
<evidence type="ECO:0000305" key="4"/>
<accession>P85241</accession>
<comment type="function">
    <text evidence="4">Probably participates in a plant defense mechanism.</text>
</comment>
<comment type="domain">
    <text evidence="1">The presence of a 'disulfide through disulfide knot' structurally defines this protein as a knottin.</text>
</comment>
<comment type="PTM">
    <text evidence="2 3">This is a cyclic peptide.</text>
</comment>
<comment type="mass spectrometry"/>
<comment type="similarity">
    <text evidence="2">Belongs to the cyclotide family. Moebius subfamily.</text>
</comment>
<comment type="caution">
    <text evidence="4">This peptide is cyclic. The start position was chosen by similarity to OAK1 (kalata-B1) for which the DNA sequence is known.</text>
</comment>
<feature type="peptide" id="PRO_0000341423" description="Cyclotide vibi-C">
    <location>
        <begin position="1"/>
        <end position="29"/>
    </location>
</feature>
<feature type="disulfide bond" evidence="1 2">
    <location>
        <begin position="5"/>
        <end position="19"/>
    </location>
</feature>
<feature type="disulfide bond" evidence="1 2">
    <location>
        <begin position="9"/>
        <end position="21"/>
    </location>
</feature>
<feature type="disulfide bond" evidence="1 2">
    <location>
        <begin position="14"/>
        <end position="26"/>
    </location>
</feature>
<feature type="cross-link" description="Cyclopeptide (Gly-Asn)" evidence="3">
    <location>
        <begin position="1"/>
        <end position="29"/>
    </location>
</feature>
<reference evidence="4" key="1">
    <citation type="journal article" date="2008" name="Phytochemistry">
        <title>The alpine violet, Viola biflora, is a rich source of cyclotides with potent cytotoxicity.</title>
        <authorList>
            <person name="Herrmann A."/>
            <person name="Burman R."/>
            <person name="Mylne J.S."/>
            <person name="Karlsson G."/>
            <person name="Gullbo J."/>
            <person name="Craik D.J."/>
            <person name="Clark R.J."/>
            <person name="Goeransson U."/>
        </authorList>
    </citation>
    <scope>PROTEIN SEQUENCE</scope>
    <scope>MASS SPECTROMETRY</scope>
</reference>
<dbReference type="SMR" id="P85241"/>
<dbReference type="GO" id="GO:0006952">
    <property type="term" value="P:defense response"/>
    <property type="evidence" value="ECO:0007669"/>
    <property type="project" value="UniProtKB-KW"/>
</dbReference>
<dbReference type="InterPro" id="IPR005535">
    <property type="entry name" value="Cyclotide"/>
</dbReference>
<dbReference type="InterPro" id="IPR036146">
    <property type="entry name" value="Cyclotide_sf"/>
</dbReference>
<dbReference type="Pfam" id="PF03784">
    <property type="entry name" value="Cyclotide"/>
    <property type="match status" value="1"/>
</dbReference>
<dbReference type="PIRSF" id="PIRSF037891">
    <property type="entry name" value="Cycloviolacin"/>
    <property type="match status" value="1"/>
</dbReference>
<dbReference type="SUPFAM" id="SSF57038">
    <property type="entry name" value="Cyclotides"/>
    <property type="match status" value="1"/>
</dbReference>
<dbReference type="PROSITE" id="PS51052">
    <property type="entry name" value="CYCLOTIDE"/>
    <property type="match status" value="1"/>
</dbReference>
<organism>
    <name type="scientific">Viola biflora</name>
    <name type="common">Yellow wood violet</name>
    <dbReference type="NCBI Taxonomy" id="214529"/>
    <lineage>
        <taxon>Eukaryota</taxon>
        <taxon>Viridiplantae</taxon>
        <taxon>Streptophyta</taxon>
        <taxon>Embryophyta</taxon>
        <taxon>Tracheophyta</taxon>
        <taxon>Spermatophyta</taxon>
        <taxon>Magnoliopsida</taxon>
        <taxon>eudicotyledons</taxon>
        <taxon>Gunneridae</taxon>
        <taxon>Pentapetalae</taxon>
        <taxon>rosids</taxon>
        <taxon>fabids</taxon>
        <taxon>Malpighiales</taxon>
        <taxon>Violaceae</taxon>
        <taxon>Viola</taxon>
        <taxon>Viola subgen. Viola</taxon>
        <taxon>Viola sect. Chamaemelanium</taxon>
    </lineage>
</organism>